<reference key="1">
    <citation type="journal article" date="2008" name="Genome Res.">
        <title>Chlamydia trachomatis: genome sequence analysis of lymphogranuloma venereum isolates.</title>
        <authorList>
            <person name="Thomson N.R."/>
            <person name="Holden M.T.G."/>
            <person name="Carder C."/>
            <person name="Lennard N."/>
            <person name="Lockey S.J."/>
            <person name="Marsh P."/>
            <person name="Skipp P."/>
            <person name="O'Connor C.D."/>
            <person name="Goodhead I."/>
            <person name="Norbertzcak H."/>
            <person name="Harris B."/>
            <person name="Ormond D."/>
            <person name="Rance R."/>
            <person name="Quail M.A."/>
            <person name="Parkhill J."/>
            <person name="Stephens R.S."/>
            <person name="Clarke I.N."/>
        </authorList>
    </citation>
    <scope>NUCLEOTIDE SEQUENCE [LARGE SCALE GENOMIC DNA]</scope>
    <source>
        <strain>UCH-1/proctitis</strain>
    </source>
</reference>
<keyword id="KW-0963">Cytoplasm</keyword>
<keyword id="KW-0489">Methyltransferase</keyword>
<keyword id="KW-0698">rRNA processing</keyword>
<keyword id="KW-0949">S-adenosyl-L-methionine</keyword>
<keyword id="KW-0808">Transferase</keyword>
<dbReference type="EC" id="2.1.1.199" evidence="1"/>
<dbReference type="EMBL" id="AM884177">
    <property type="protein sequence ID" value="CAP06918.1"/>
    <property type="molecule type" value="Genomic_DNA"/>
</dbReference>
<dbReference type="RefSeq" id="WP_009873689.1">
    <property type="nucleotide sequence ID" value="NC_010280.2"/>
</dbReference>
<dbReference type="SMR" id="B0BBQ3"/>
<dbReference type="KEGG" id="ctl:CTLon_0520"/>
<dbReference type="HOGENOM" id="CLU_038422_3_0_0"/>
<dbReference type="Proteomes" id="UP001154401">
    <property type="component" value="Chromosome"/>
</dbReference>
<dbReference type="GO" id="GO:0005737">
    <property type="term" value="C:cytoplasm"/>
    <property type="evidence" value="ECO:0007669"/>
    <property type="project" value="UniProtKB-SubCell"/>
</dbReference>
<dbReference type="GO" id="GO:0071424">
    <property type="term" value="F:rRNA (cytosine-N4-)-methyltransferase activity"/>
    <property type="evidence" value="ECO:0007669"/>
    <property type="project" value="UniProtKB-UniRule"/>
</dbReference>
<dbReference type="GO" id="GO:0070475">
    <property type="term" value="P:rRNA base methylation"/>
    <property type="evidence" value="ECO:0007669"/>
    <property type="project" value="UniProtKB-UniRule"/>
</dbReference>
<dbReference type="FunFam" id="1.10.150.170:FF:000003">
    <property type="entry name" value="Ribosomal RNA small subunit methyltransferase H"/>
    <property type="match status" value="1"/>
</dbReference>
<dbReference type="Gene3D" id="1.10.150.170">
    <property type="entry name" value="Putative methyltransferase TM0872, insert domain"/>
    <property type="match status" value="1"/>
</dbReference>
<dbReference type="Gene3D" id="3.40.50.150">
    <property type="entry name" value="Vaccinia Virus protein VP39"/>
    <property type="match status" value="1"/>
</dbReference>
<dbReference type="HAMAP" id="MF_01007">
    <property type="entry name" value="16SrRNA_methyltr_H"/>
    <property type="match status" value="1"/>
</dbReference>
<dbReference type="InterPro" id="IPR002903">
    <property type="entry name" value="RsmH"/>
</dbReference>
<dbReference type="InterPro" id="IPR023397">
    <property type="entry name" value="SAM-dep_MeTrfase_MraW_recog"/>
</dbReference>
<dbReference type="InterPro" id="IPR029063">
    <property type="entry name" value="SAM-dependent_MTases_sf"/>
</dbReference>
<dbReference type="NCBIfam" id="TIGR00006">
    <property type="entry name" value="16S rRNA (cytosine(1402)-N(4))-methyltransferase RsmH"/>
    <property type="match status" value="1"/>
</dbReference>
<dbReference type="PANTHER" id="PTHR11265:SF0">
    <property type="entry name" value="12S RRNA N4-METHYLCYTIDINE METHYLTRANSFERASE"/>
    <property type="match status" value="1"/>
</dbReference>
<dbReference type="PANTHER" id="PTHR11265">
    <property type="entry name" value="S-ADENOSYL-METHYLTRANSFERASE MRAW"/>
    <property type="match status" value="1"/>
</dbReference>
<dbReference type="Pfam" id="PF01795">
    <property type="entry name" value="Methyltransf_5"/>
    <property type="match status" value="1"/>
</dbReference>
<dbReference type="PIRSF" id="PIRSF004486">
    <property type="entry name" value="MraW"/>
    <property type="match status" value="1"/>
</dbReference>
<dbReference type="SUPFAM" id="SSF81799">
    <property type="entry name" value="Putative methyltransferase TM0872, insert domain"/>
    <property type="match status" value="1"/>
</dbReference>
<dbReference type="SUPFAM" id="SSF53335">
    <property type="entry name" value="S-adenosyl-L-methionine-dependent methyltransferases"/>
    <property type="match status" value="1"/>
</dbReference>
<protein>
    <recommendedName>
        <fullName evidence="1">Ribosomal RNA small subunit methyltransferase H</fullName>
        <ecNumber evidence="1">2.1.1.199</ecNumber>
    </recommendedName>
    <alternativeName>
        <fullName evidence="1">16S rRNA m(4)C1402 methyltransferase</fullName>
    </alternativeName>
    <alternativeName>
        <fullName evidence="1">rRNA (cytosine-N(4)-)-methyltransferase RsmH</fullName>
    </alternativeName>
</protein>
<gene>
    <name evidence="1" type="primary">rsmH</name>
    <name type="synonym">mraW</name>
    <name type="ordered locus">CTLon_0520</name>
</gene>
<evidence type="ECO:0000255" key="1">
    <source>
        <dbReference type="HAMAP-Rule" id="MF_01007"/>
    </source>
</evidence>
<name>RSMH_CHLTB</name>
<proteinExistence type="inferred from homology"/>
<organism>
    <name type="scientific">Chlamydia trachomatis serovar L2b (strain UCH-1/proctitis)</name>
    <dbReference type="NCBI Taxonomy" id="471473"/>
    <lineage>
        <taxon>Bacteria</taxon>
        <taxon>Pseudomonadati</taxon>
        <taxon>Chlamydiota</taxon>
        <taxon>Chlamydiia</taxon>
        <taxon>Chlamydiales</taxon>
        <taxon>Chlamydiaceae</taxon>
        <taxon>Chlamydia/Chlamydophila group</taxon>
        <taxon>Chlamydia</taxon>
    </lineage>
</organism>
<feature type="chain" id="PRO_0000386795" description="Ribosomal RNA small subunit methyltransferase H">
    <location>
        <begin position="1"/>
        <end position="300"/>
    </location>
</feature>
<feature type="binding site" evidence="1">
    <location>
        <begin position="35"/>
        <end position="37"/>
    </location>
    <ligand>
        <name>S-adenosyl-L-methionine</name>
        <dbReference type="ChEBI" id="CHEBI:59789"/>
    </ligand>
</feature>
<feature type="binding site" evidence="1">
    <location>
        <position position="55"/>
    </location>
    <ligand>
        <name>S-adenosyl-L-methionine</name>
        <dbReference type="ChEBI" id="CHEBI:59789"/>
    </ligand>
</feature>
<feature type="binding site" evidence="1">
    <location>
        <position position="82"/>
    </location>
    <ligand>
        <name>S-adenosyl-L-methionine</name>
        <dbReference type="ChEBI" id="CHEBI:59789"/>
    </ligand>
</feature>
<feature type="binding site" evidence="1">
    <location>
        <position position="100"/>
    </location>
    <ligand>
        <name>S-adenosyl-L-methionine</name>
        <dbReference type="ChEBI" id="CHEBI:59789"/>
    </ligand>
</feature>
<feature type="binding site" evidence="1">
    <location>
        <position position="107"/>
    </location>
    <ligand>
        <name>S-adenosyl-L-methionine</name>
        <dbReference type="ChEBI" id="CHEBI:59789"/>
    </ligand>
</feature>
<accession>B0BBQ3</accession>
<comment type="function">
    <text evidence="1">Specifically methylates the N4 position of cytidine in position 1402 (C1402) of 16S rRNA.</text>
</comment>
<comment type="catalytic activity">
    <reaction evidence="1">
        <text>cytidine(1402) in 16S rRNA + S-adenosyl-L-methionine = N(4)-methylcytidine(1402) in 16S rRNA + S-adenosyl-L-homocysteine + H(+)</text>
        <dbReference type="Rhea" id="RHEA:42928"/>
        <dbReference type="Rhea" id="RHEA-COMP:10286"/>
        <dbReference type="Rhea" id="RHEA-COMP:10287"/>
        <dbReference type="ChEBI" id="CHEBI:15378"/>
        <dbReference type="ChEBI" id="CHEBI:57856"/>
        <dbReference type="ChEBI" id="CHEBI:59789"/>
        <dbReference type="ChEBI" id="CHEBI:74506"/>
        <dbReference type="ChEBI" id="CHEBI:82748"/>
        <dbReference type="EC" id="2.1.1.199"/>
    </reaction>
</comment>
<comment type="subcellular location">
    <subcellularLocation>
        <location evidence="1">Cytoplasm</location>
    </subcellularLocation>
</comment>
<comment type="similarity">
    <text evidence="1">Belongs to the methyltransferase superfamily. RsmH family.</text>
</comment>
<sequence>MTDSIPHIPVLVKESLSLFRGRNPVVFCDVTVGAGGHAEAFLTEFPSIERYDGSDRDLSALALSENRLLPFKDRVRLRHASFEEVDTLTSDGTYDGVLADLGVSSMQLNNLERGFSFQGEDHPLDMRMDTSRGMTASEVLNSLREEEIGEIFRNYGEEPLWRSAAAAVVHFRKKKKILTVKDLKDATSGVFPSYRLRKKIHPLTLIFQALRIYVNQEGAQLKVLLDSAFRWLRPGGRLAVISFCSLDDRPVKWAFREAEARGLGKILTKKVIMPSYEETRMNPRSRSAKLRCFEKSFEDK</sequence>